<accession>Q6CZC7</accession>
<proteinExistence type="inferred from homology"/>
<comment type="function">
    <text evidence="1">Functions in the biosynthesis of branched-chain amino acids. Catalyzes the dehydration of (2R,3R)-2,3-dihydroxy-3-methylpentanoate (2,3-dihydroxy-3-methylvalerate) into 2-oxo-3-methylpentanoate (2-oxo-3-methylvalerate) and of (2R)-2,3-dihydroxy-3-methylbutanoate (2,3-dihydroxyisovalerate) into 2-oxo-3-methylbutanoate (2-oxoisovalerate), the penultimate precursor to L-isoleucine and L-valine, respectively.</text>
</comment>
<comment type="catalytic activity">
    <reaction evidence="1">
        <text>(2R)-2,3-dihydroxy-3-methylbutanoate = 3-methyl-2-oxobutanoate + H2O</text>
        <dbReference type="Rhea" id="RHEA:24809"/>
        <dbReference type="ChEBI" id="CHEBI:11851"/>
        <dbReference type="ChEBI" id="CHEBI:15377"/>
        <dbReference type="ChEBI" id="CHEBI:49072"/>
        <dbReference type="EC" id="4.2.1.9"/>
    </reaction>
    <physiologicalReaction direction="left-to-right" evidence="1">
        <dbReference type="Rhea" id="RHEA:24810"/>
    </physiologicalReaction>
</comment>
<comment type="catalytic activity">
    <reaction evidence="1">
        <text>(2R,3R)-2,3-dihydroxy-3-methylpentanoate = (S)-3-methyl-2-oxopentanoate + H2O</text>
        <dbReference type="Rhea" id="RHEA:27694"/>
        <dbReference type="ChEBI" id="CHEBI:15377"/>
        <dbReference type="ChEBI" id="CHEBI:35146"/>
        <dbReference type="ChEBI" id="CHEBI:49258"/>
        <dbReference type="EC" id="4.2.1.9"/>
    </reaction>
    <physiologicalReaction direction="left-to-right" evidence="1">
        <dbReference type="Rhea" id="RHEA:27695"/>
    </physiologicalReaction>
</comment>
<comment type="cofactor">
    <cofactor evidence="1">
        <name>[2Fe-2S] cluster</name>
        <dbReference type="ChEBI" id="CHEBI:190135"/>
    </cofactor>
    <text evidence="1">Binds 1 [2Fe-2S] cluster per subunit. This cluster acts as a Lewis acid cofactor.</text>
</comment>
<comment type="cofactor">
    <cofactor evidence="1">
        <name>Mg(2+)</name>
        <dbReference type="ChEBI" id="CHEBI:18420"/>
    </cofactor>
</comment>
<comment type="pathway">
    <text evidence="1">Amino-acid biosynthesis; L-isoleucine biosynthesis; L-isoleucine from 2-oxobutanoate: step 3/4.</text>
</comment>
<comment type="pathway">
    <text evidence="1">Amino-acid biosynthesis; L-valine biosynthesis; L-valine from pyruvate: step 3/4.</text>
</comment>
<comment type="subunit">
    <text evidence="1">Homodimer.</text>
</comment>
<comment type="similarity">
    <text evidence="1">Belongs to the IlvD/Edd family.</text>
</comment>
<name>ILVD_PECAS</name>
<sequence length="616" mass="65647">MPKYRSATTTHGRNMAGARALWRATGMTDDDFGKPIIAVVNSFTQFVPGHVHLRDLGKLVAEQIEASGGVAKEFNTIAVDDGIAMGHGGMLYSLPSRELIADSVEYMVNAHCADAMVCISNCDKITPGMLMASLRLNIPVIFVSGGPMEAGKTKLSNQIIKLDLIDAMIQGANPNVSDADSEQIERSACPTCGSCSGMFTANSMNCLTEALGLSQPANGSLLATHADRRDLFLNAGTRIVGLAKRYYEQDDASVLPRNIANKAAFENAMILDIAMGGSTNTVLHLLAAAQEGEIDFTMSDIDRLSRKVPHLCKVAPSGQKYHMEDVHRAGGVIGILGELDRAGLLNREVNNVLGKTLPETLEAYDVMLTKDESVKRMYSAGPAGIRTTKAFSQDCRWDSLDTDRQEGCIRSREYAYSQDGGLAVLYGNIAVDGCIVKTAGVDKESLIFRGPAKVYESQDDAVEAILGGKVVAGDVVVIRYEGPKGGPGMQEMLYPTTYLKSMGLGKSCALITDGRFSGGTSGLSIGHASPEAASGGIIGLVQDGDMIAIDIPSRSIVLDVAENELASRRETELARGDAAWTPHNRERQVSFALRAYAILATSADKGAVRDKSKLGG</sequence>
<feature type="chain" id="PRO_0000225391" description="Dihydroxy-acid dehydratase">
    <location>
        <begin position="1"/>
        <end position="616"/>
    </location>
</feature>
<feature type="active site" description="Proton acceptor" evidence="1">
    <location>
        <position position="517"/>
    </location>
</feature>
<feature type="binding site" evidence="1">
    <location>
        <position position="81"/>
    </location>
    <ligand>
        <name>Mg(2+)</name>
        <dbReference type="ChEBI" id="CHEBI:18420"/>
    </ligand>
</feature>
<feature type="binding site" evidence="1">
    <location>
        <position position="122"/>
    </location>
    <ligand>
        <name>[2Fe-2S] cluster</name>
        <dbReference type="ChEBI" id="CHEBI:190135"/>
    </ligand>
</feature>
<feature type="binding site" evidence="1">
    <location>
        <position position="123"/>
    </location>
    <ligand>
        <name>Mg(2+)</name>
        <dbReference type="ChEBI" id="CHEBI:18420"/>
    </ligand>
</feature>
<feature type="binding site" description="via carbamate group" evidence="1">
    <location>
        <position position="124"/>
    </location>
    <ligand>
        <name>Mg(2+)</name>
        <dbReference type="ChEBI" id="CHEBI:18420"/>
    </ligand>
</feature>
<feature type="binding site" evidence="1">
    <location>
        <position position="195"/>
    </location>
    <ligand>
        <name>[2Fe-2S] cluster</name>
        <dbReference type="ChEBI" id="CHEBI:190135"/>
    </ligand>
</feature>
<feature type="binding site" evidence="1">
    <location>
        <position position="491"/>
    </location>
    <ligand>
        <name>Mg(2+)</name>
        <dbReference type="ChEBI" id="CHEBI:18420"/>
    </ligand>
</feature>
<feature type="modified residue" description="N6-carboxylysine" evidence="1">
    <location>
        <position position="124"/>
    </location>
</feature>
<reference key="1">
    <citation type="journal article" date="2004" name="Proc. Natl. Acad. Sci. U.S.A.">
        <title>Genome sequence of the enterobacterial phytopathogen Erwinia carotovora subsp. atroseptica and characterization of virulence factors.</title>
        <authorList>
            <person name="Bell K.S."/>
            <person name="Sebaihia M."/>
            <person name="Pritchard L."/>
            <person name="Holden M.T.G."/>
            <person name="Hyman L.J."/>
            <person name="Holeva M.C."/>
            <person name="Thomson N.R."/>
            <person name="Bentley S.D."/>
            <person name="Churcher L.J.C."/>
            <person name="Mungall K."/>
            <person name="Atkin R."/>
            <person name="Bason N."/>
            <person name="Brooks K."/>
            <person name="Chillingworth T."/>
            <person name="Clark K."/>
            <person name="Doggett J."/>
            <person name="Fraser A."/>
            <person name="Hance Z."/>
            <person name="Hauser H."/>
            <person name="Jagels K."/>
            <person name="Moule S."/>
            <person name="Norbertczak H."/>
            <person name="Ormond D."/>
            <person name="Price C."/>
            <person name="Quail M.A."/>
            <person name="Sanders M."/>
            <person name="Walker D."/>
            <person name="Whitehead S."/>
            <person name="Salmond G.P.C."/>
            <person name="Birch P.R.J."/>
            <person name="Parkhill J."/>
            <person name="Toth I.K."/>
        </authorList>
    </citation>
    <scope>NUCLEOTIDE SEQUENCE [LARGE SCALE GENOMIC DNA]</scope>
    <source>
        <strain>SCRI 1043 / ATCC BAA-672</strain>
    </source>
</reference>
<protein>
    <recommendedName>
        <fullName evidence="1">Dihydroxy-acid dehydratase</fullName>
        <shortName evidence="1">DAD</shortName>
        <ecNumber evidence="1">4.2.1.9</ecNumber>
    </recommendedName>
</protein>
<organism>
    <name type="scientific">Pectobacterium atrosepticum (strain SCRI 1043 / ATCC BAA-672)</name>
    <name type="common">Erwinia carotovora subsp. atroseptica</name>
    <dbReference type="NCBI Taxonomy" id="218491"/>
    <lineage>
        <taxon>Bacteria</taxon>
        <taxon>Pseudomonadati</taxon>
        <taxon>Pseudomonadota</taxon>
        <taxon>Gammaproteobacteria</taxon>
        <taxon>Enterobacterales</taxon>
        <taxon>Pectobacteriaceae</taxon>
        <taxon>Pectobacterium</taxon>
    </lineage>
</organism>
<evidence type="ECO:0000255" key="1">
    <source>
        <dbReference type="HAMAP-Rule" id="MF_00012"/>
    </source>
</evidence>
<gene>
    <name evidence="1" type="primary">ilvD</name>
    <name type="ordered locus">ECA4226</name>
</gene>
<dbReference type="EC" id="4.2.1.9" evidence="1"/>
<dbReference type="EMBL" id="BX950851">
    <property type="protein sequence ID" value="CAG77123.1"/>
    <property type="molecule type" value="Genomic_DNA"/>
</dbReference>
<dbReference type="RefSeq" id="WP_011095697.1">
    <property type="nucleotide sequence ID" value="NC_004547.2"/>
</dbReference>
<dbReference type="SMR" id="Q6CZC7"/>
<dbReference type="STRING" id="218491.ECA4226"/>
<dbReference type="GeneID" id="57210892"/>
<dbReference type="KEGG" id="eca:ECA4226"/>
<dbReference type="PATRIC" id="fig|218491.5.peg.4303"/>
<dbReference type="eggNOG" id="COG0129">
    <property type="taxonomic scope" value="Bacteria"/>
</dbReference>
<dbReference type="HOGENOM" id="CLU_014271_4_2_6"/>
<dbReference type="OrthoDB" id="9807077at2"/>
<dbReference type="UniPathway" id="UPA00047">
    <property type="reaction ID" value="UER00057"/>
</dbReference>
<dbReference type="UniPathway" id="UPA00049">
    <property type="reaction ID" value="UER00061"/>
</dbReference>
<dbReference type="Proteomes" id="UP000007966">
    <property type="component" value="Chromosome"/>
</dbReference>
<dbReference type="GO" id="GO:0005829">
    <property type="term" value="C:cytosol"/>
    <property type="evidence" value="ECO:0007669"/>
    <property type="project" value="TreeGrafter"/>
</dbReference>
<dbReference type="GO" id="GO:0051537">
    <property type="term" value="F:2 iron, 2 sulfur cluster binding"/>
    <property type="evidence" value="ECO:0007669"/>
    <property type="project" value="UniProtKB-UniRule"/>
</dbReference>
<dbReference type="GO" id="GO:0004160">
    <property type="term" value="F:dihydroxy-acid dehydratase activity"/>
    <property type="evidence" value="ECO:0007669"/>
    <property type="project" value="UniProtKB-UniRule"/>
</dbReference>
<dbReference type="GO" id="GO:0000287">
    <property type="term" value="F:magnesium ion binding"/>
    <property type="evidence" value="ECO:0007669"/>
    <property type="project" value="UniProtKB-UniRule"/>
</dbReference>
<dbReference type="GO" id="GO:0009097">
    <property type="term" value="P:isoleucine biosynthetic process"/>
    <property type="evidence" value="ECO:0007669"/>
    <property type="project" value="UniProtKB-UniRule"/>
</dbReference>
<dbReference type="GO" id="GO:0009099">
    <property type="term" value="P:L-valine biosynthetic process"/>
    <property type="evidence" value="ECO:0007669"/>
    <property type="project" value="UniProtKB-UniRule"/>
</dbReference>
<dbReference type="FunFam" id="3.50.30.80:FF:000001">
    <property type="entry name" value="Dihydroxy-acid dehydratase"/>
    <property type="match status" value="1"/>
</dbReference>
<dbReference type="Gene3D" id="3.50.30.80">
    <property type="entry name" value="IlvD/EDD C-terminal domain-like"/>
    <property type="match status" value="1"/>
</dbReference>
<dbReference type="HAMAP" id="MF_00012">
    <property type="entry name" value="IlvD"/>
    <property type="match status" value="1"/>
</dbReference>
<dbReference type="InterPro" id="IPR042096">
    <property type="entry name" value="Dihydro-acid_dehy_C"/>
</dbReference>
<dbReference type="InterPro" id="IPR004404">
    <property type="entry name" value="DihydroxyA_deHydtase"/>
</dbReference>
<dbReference type="InterPro" id="IPR020558">
    <property type="entry name" value="DiOHA_6PGluconate_deHydtase_CS"/>
</dbReference>
<dbReference type="InterPro" id="IPR056740">
    <property type="entry name" value="ILV_EDD_C"/>
</dbReference>
<dbReference type="InterPro" id="IPR000581">
    <property type="entry name" value="ILV_EDD_N"/>
</dbReference>
<dbReference type="InterPro" id="IPR037237">
    <property type="entry name" value="IlvD/EDD_N"/>
</dbReference>
<dbReference type="NCBIfam" id="TIGR00110">
    <property type="entry name" value="ilvD"/>
    <property type="match status" value="1"/>
</dbReference>
<dbReference type="NCBIfam" id="NF009103">
    <property type="entry name" value="PRK12448.1"/>
    <property type="match status" value="1"/>
</dbReference>
<dbReference type="PANTHER" id="PTHR43661">
    <property type="entry name" value="D-XYLONATE DEHYDRATASE"/>
    <property type="match status" value="1"/>
</dbReference>
<dbReference type="PANTHER" id="PTHR43661:SF3">
    <property type="entry name" value="D-XYLONATE DEHYDRATASE YAGF-RELATED"/>
    <property type="match status" value="1"/>
</dbReference>
<dbReference type="Pfam" id="PF24877">
    <property type="entry name" value="ILV_EDD_C"/>
    <property type="match status" value="1"/>
</dbReference>
<dbReference type="Pfam" id="PF00920">
    <property type="entry name" value="ILVD_EDD_N"/>
    <property type="match status" value="1"/>
</dbReference>
<dbReference type="SUPFAM" id="SSF143975">
    <property type="entry name" value="IlvD/EDD N-terminal domain-like"/>
    <property type="match status" value="1"/>
</dbReference>
<dbReference type="SUPFAM" id="SSF52016">
    <property type="entry name" value="LeuD/IlvD-like"/>
    <property type="match status" value="1"/>
</dbReference>
<dbReference type="PROSITE" id="PS00886">
    <property type="entry name" value="ILVD_EDD_1"/>
    <property type="match status" value="1"/>
</dbReference>
<dbReference type="PROSITE" id="PS00887">
    <property type="entry name" value="ILVD_EDD_2"/>
    <property type="match status" value="1"/>
</dbReference>
<keyword id="KW-0001">2Fe-2S</keyword>
<keyword id="KW-0028">Amino-acid biosynthesis</keyword>
<keyword id="KW-0100">Branched-chain amino acid biosynthesis</keyword>
<keyword id="KW-0408">Iron</keyword>
<keyword id="KW-0411">Iron-sulfur</keyword>
<keyword id="KW-0456">Lyase</keyword>
<keyword id="KW-0460">Magnesium</keyword>
<keyword id="KW-0479">Metal-binding</keyword>
<keyword id="KW-1185">Reference proteome</keyword>